<keyword id="KW-0020">Allergen</keyword>
<keyword id="KW-0106">Calcium</keyword>
<keyword id="KW-0903">Direct protein sequencing</keyword>
<keyword id="KW-0505">Motor protein</keyword>
<keyword id="KW-0514">Muscle protein</keyword>
<keyword id="KW-0518">Myosin</keyword>
<keyword id="KW-0597">Phosphoprotein</keyword>
<keyword id="KW-0677">Repeat</keyword>
<comment type="subunit">
    <text evidence="1">Myosin is a hexamer of 2 heavy chains and 4 light chains.</text>
</comment>
<comment type="allergen">
    <text evidence="3">Causes an allergic reaction in human.</text>
</comment>
<comment type="miscellaneous">
    <text evidence="2">This chain binds calcium.</text>
</comment>
<accession>P86703</accession>
<feature type="chain" id="PRO_0000398790" description="Myosin light chain">
    <location>
        <begin position="1" status="less than"/>
        <end position="16" status="greater than"/>
    </location>
</feature>
<feature type="non-consecutive residues" evidence="4">
    <location>
        <begin position="8"/>
        <end position="9"/>
    </location>
</feature>
<feature type="non-terminal residue" evidence="4">
    <location>
        <position position="1"/>
    </location>
</feature>
<feature type="non-terminal residue" evidence="4">
    <location>
        <position position="16"/>
    </location>
</feature>
<sequence length="16" mass="1871">EGFQLMDRGTFDEIGR</sequence>
<organism>
    <name type="scientific">Penaeus monodon</name>
    <name type="common">Giant tiger prawn</name>
    <dbReference type="NCBI Taxonomy" id="6687"/>
    <lineage>
        <taxon>Eukaryota</taxon>
        <taxon>Metazoa</taxon>
        <taxon>Ecdysozoa</taxon>
        <taxon>Arthropoda</taxon>
        <taxon>Crustacea</taxon>
        <taxon>Multicrustacea</taxon>
        <taxon>Malacostraca</taxon>
        <taxon>Eumalacostraca</taxon>
        <taxon>Eucarida</taxon>
        <taxon>Decapoda</taxon>
        <taxon>Dendrobranchiata</taxon>
        <taxon>Penaeoidea</taxon>
        <taxon>Penaeidae</taxon>
        <taxon>Penaeus</taxon>
    </lineage>
</organism>
<reference evidence="5" key="1">
    <citation type="journal article" date="2010" name="Rapid Commun. Mass Spectrom.">
        <title>Analysis of the allergenic proteins in black tiger prawn (Penaeus monodon) and characterization of the major allergen tropomyosin using mass spectrometry.</title>
        <authorList>
            <person name="Abdel Rahman A.M."/>
            <person name="Kamath S."/>
            <person name="Lopata A.L."/>
            <person name="Helleur R.J."/>
        </authorList>
    </citation>
    <scope>PROTEIN SEQUENCE</scope>
    <scope>ALLERGEN</scope>
    <source>
        <tissue evidence="3">Muscle</tissue>
    </source>
</reference>
<proteinExistence type="evidence at protein level"/>
<evidence type="ECO:0000250" key="1"/>
<evidence type="ECO:0000250" key="2">
    <source>
        <dbReference type="UniProtKB" id="P02611"/>
    </source>
</evidence>
<evidence type="ECO:0000269" key="3">
    <source ref="1"/>
</evidence>
<evidence type="ECO:0000303" key="4">
    <source ref="1"/>
</evidence>
<evidence type="ECO:0000305" key="5"/>
<dbReference type="GO" id="GO:0016459">
    <property type="term" value="C:myosin complex"/>
    <property type="evidence" value="ECO:0007669"/>
    <property type="project" value="UniProtKB-KW"/>
</dbReference>
<protein>
    <recommendedName>
        <fullName evidence="4">Myosin light chain</fullName>
    </recommendedName>
</protein>
<name>MYL_PENMO</name>